<organism>
    <name type="scientific">Schizosaccharomyces pombe (strain 972 / ATCC 24843)</name>
    <name type="common">Fission yeast</name>
    <dbReference type="NCBI Taxonomy" id="284812"/>
    <lineage>
        <taxon>Eukaryota</taxon>
        <taxon>Fungi</taxon>
        <taxon>Dikarya</taxon>
        <taxon>Ascomycota</taxon>
        <taxon>Taphrinomycotina</taxon>
        <taxon>Schizosaccharomycetes</taxon>
        <taxon>Schizosaccharomycetales</taxon>
        <taxon>Schizosaccharomycetaceae</taxon>
        <taxon>Schizosaccharomyces</taxon>
    </lineage>
</organism>
<gene>
    <name type="ORF">SPBC216.04c</name>
</gene>
<keyword id="KW-0963">Cytoplasm</keyword>
<keyword id="KW-0479">Metal-binding</keyword>
<keyword id="KW-0539">Nucleus</keyword>
<keyword id="KW-0560">Oxidoreductase</keyword>
<keyword id="KW-1185">Reference proteome</keyword>
<keyword id="KW-0862">Zinc</keyword>
<dbReference type="EMBL" id="CU329671">
    <property type="protein sequence ID" value="CAB40164.1"/>
    <property type="molecule type" value="Genomic_DNA"/>
</dbReference>
<dbReference type="PIR" id="T39910">
    <property type="entry name" value="T39910"/>
</dbReference>
<dbReference type="SMR" id="Q9Y7K1"/>
<dbReference type="BioGRID" id="277292">
    <property type="interactions" value="11"/>
</dbReference>
<dbReference type="FunCoup" id="Q9Y7K1">
    <property type="interactions" value="67"/>
</dbReference>
<dbReference type="STRING" id="284812.Q9Y7K1"/>
<dbReference type="PaxDb" id="4896-SPBC216.04c.1"/>
<dbReference type="EnsemblFungi" id="SPBC216.04c.1">
    <property type="protein sequence ID" value="SPBC216.04c.1:pep"/>
    <property type="gene ID" value="SPBC216.04c"/>
</dbReference>
<dbReference type="KEGG" id="spo:2540772"/>
<dbReference type="PomBase" id="SPBC216.04c"/>
<dbReference type="VEuPathDB" id="FungiDB:SPBC216.04c"/>
<dbReference type="eggNOG" id="KOG0856">
    <property type="taxonomic scope" value="Eukaryota"/>
</dbReference>
<dbReference type="HOGENOM" id="CLU_031040_8_1_1"/>
<dbReference type="InParanoid" id="Q9Y7K1"/>
<dbReference type="OMA" id="DEQWRAE"/>
<dbReference type="PhylomeDB" id="Q9Y7K1"/>
<dbReference type="PRO" id="PR:Q9Y7K1"/>
<dbReference type="Proteomes" id="UP000002485">
    <property type="component" value="Chromosome II"/>
</dbReference>
<dbReference type="GO" id="GO:0005737">
    <property type="term" value="C:cytoplasm"/>
    <property type="evidence" value="ECO:0000318"/>
    <property type="project" value="GO_Central"/>
</dbReference>
<dbReference type="GO" id="GO:0005829">
    <property type="term" value="C:cytosol"/>
    <property type="evidence" value="ECO:0007005"/>
    <property type="project" value="PomBase"/>
</dbReference>
<dbReference type="GO" id="GO:0005634">
    <property type="term" value="C:nucleus"/>
    <property type="evidence" value="ECO:0007005"/>
    <property type="project" value="PomBase"/>
</dbReference>
<dbReference type="GO" id="GO:0046872">
    <property type="term" value="F:metal ion binding"/>
    <property type="evidence" value="ECO:0007669"/>
    <property type="project" value="UniProtKB-KW"/>
</dbReference>
<dbReference type="GO" id="GO:0033743">
    <property type="term" value="F:peptide-methionine (R)-S-oxide reductase activity"/>
    <property type="evidence" value="ECO:0000318"/>
    <property type="project" value="GO_Central"/>
</dbReference>
<dbReference type="GO" id="GO:1990748">
    <property type="term" value="P:cellular detoxification"/>
    <property type="evidence" value="ECO:0000305"/>
    <property type="project" value="PomBase"/>
</dbReference>
<dbReference type="GO" id="GO:0034599">
    <property type="term" value="P:cellular response to oxidative stress"/>
    <property type="evidence" value="ECO:0000318"/>
    <property type="project" value="GO_Central"/>
</dbReference>
<dbReference type="GO" id="GO:0030091">
    <property type="term" value="P:protein repair"/>
    <property type="evidence" value="ECO:0000250"/>
    <property type="project" value="PomBase"/>
</dbReference>
<dbReference type="FunFam" id="2.170.150.20:FF:000009">
    <property type="entry name" value="Peptide-methionine (R)-S-oxide reductase"/>
    <property type="match status" value="1"/>
</dbReference>
<dbReference type="Gene3D" id="2.170.150.20">
    <property type="entry name" value="Peptide methionine sulfoxide reductase"/>
    <property type="match status" value="1"/>
</dbReference>
<dbReference type="InterPro" id="IPR028427">
    <property type="entry name" value="Met_Sox_Rdtase_MsrB"/>
</dbReference>
<dbReference type="InterPro" id="IPR002579">
    <property type="entry name" value="Met_Sox_Rdtase_MsrB_dom"/>
</dbReference>
<dbReference type="InterPro" id="IPR011057">
    <property type="entry name" value="Mss4-like_sf"/>
</dbReference>
<dbReference type="NCBIfam" id="TIGR00357">
    <property type="entry name" value="peptide-methionine (R)-S-oxide reductase MsrB"/>
    <property type="match status" value="1"/>
</dbReference>
<dbReference type="PANTHER" id="PTHR46081">
    <property type="entry name" value="PEPTIDE METHIONINE SULFOXIDE REDUCTASE 2"/>
    <property type="match status" value="1"/>
</dbReference>
<dbReference type="PANTHER" id="PTHR46081:SF8">
    <property type="entry name" value="PEPTIDE METHIONINE SULFOXIDE REDUCTASE 2"/>
    <property type="match status" value="1"/>
</dbReference>
<dbReference type="Pfam" id="PF01641">
    <property type="entry name" value="SelR"/>
    <property type="match status" value="1"/>
</dbReference>
<dbReference type="SUPFAM" id="SSF51316">
    <property type="entry name" value="Mss4-like"/>
    <property type="match status" value="1"/>
</dbReference>
<dbReference type="PROSITE" id="PS51790">
    <property type="entry name" value="MSRB"/>
    <property type="match status" value="1"/>
</dbReference>
<evidence type="ECO:0000250" key="1"/>
<evidence type="ECO:0000255" key="2">
    <source>
        <dbReference type="PROSITE-ProRule" id="PRU01126"/>
    </source>
</evidence>
<evidence type="ECO:0000269" key="3">
    <source>
    </source>
</evidence>
<evidence type="ECO:0000305" key="4"/>
<sequence>MGFPLEKSEDEWKKELGPEKYRIMRQKGTEHPGAGRFTHQFPKQGVFVCAACKELLYKASTKFESHCGWPAFFDNLPGKVKRIEDNSYGMHRVEAVCANCGGHLGHIFKGEGYSNPTDERHCINSASLEFHNEATNDN</sequence>
<comment type="cofactor">
    <cofactor evidence="1">
        <name>Zn(2+)</name>
        <dbReference type="ChEBI" id="CHEBI:29105"/>
    </cofactor>
    <text evidence="1">Binds 1 zinc ion per subunit.</text>
</comment>
<comment type="subcellular location">
    <subcellularLocation>
        <location evidence="3">Cytoplasm</location>
    </subcellularLocation>
    <subcellularLocation>
        <location evidence="3">Nucleus</location>
    </subcellularLocation>
</comment>
<comment type="similarity">
    <text evidence="4">Belongs to the MsrB Met sulfoxide reductase family.</text>
</comment>
<accession>Q9Y7K1</accession>
<protein>
    <recommendedName>
        <fullName>Uncharacterized protein C216.04c</fullName>
    </recommendedName>
</protein>
<feature type="chain" id="PRO_0000316245" description="Uncharacterized protein C216.04c">
    <location>
        <begin position="1"/>
        <end position="138"/>
    </location>
</feature>
<feature type="domain" description="MsrB" evidence="2">
    <location>
        <begin position="9"/>
        <end position="133"/>
    </location>
</feature>
<feature type="active site" description="Nucleophile" evidence="2">
    <location>
        <position position="122"/>
    </location>
</feature>
<feature type="binding site" evidence="2">
    <location>
        <position position="49"/>
    </location>
    <ligand>
        <name>Zn(2+)</name>
        <dbReference type="ChEBI" id="CHEBI:29105"/>
    </ligand>
</feature>
<feature type="binding site" evidence="2">
    <location>
        <position position="52"/>
    </location>
    <ligand>
        <name>Zn(2+)</name>
        <dbReference type="ChEBI" id="CHEBI:29105"/>
    </ligand>
</feature>
<feature type="binding site" evidence="2">
    <location>
        <position position="97"/>
    </location>
    <ligand>
        <name>Zn(2+)</name>
        <dbReference type="ChEBI" id="CHEBI:29105"/>
    </ligand>
</feature>
<feature type="binding site" evidence="2">
    <location>
        <position position="100"/>
    </location>
    <ligand>
        <name>Zn(2+)</name>
        <dbReference type="ChEBI" id="CHEBI:29105"/>
    </ligand>
</feature>
<reference key="1">
    <citation type="journal article" date="2002" name="Nature">
        <title>The genome sequence of Schizosaccharomyces pombe.</title>
        <authorList>
            <person name="Wood V."/>
            <person name="Gwilliam R."/>
            <person name="Rajandream M.A."/>
            <person name="Lyne M.H."/>
            <person name="Lyne R."/>
            <person name="Stewart A."/>
            <person name="Sgouros J.G."/>
            <person name="Peat N."/>
            <person name="Hayles J."/>
            <person name="Baker S.G."/>
            <person name="Basham D."/>
            <person name="Bowman S."/>
            <person name="Brooks K."/>
            <person name="Brown D."/>
            <person name="Brown S."/>
            <person name="Chillingworth T."/>
            <person name="Churcher C.M."/>
            <person name="Collins M."/>
            <person name="Connor R."/>
            <person name="Cronin A."/>
            <person name="Davis P."/>
            <person name="Feltwell T."/>
            <person name="Fraser A."/>
            <person name="Gentles S."/>
            <person name="Goble A."/>
            <person name="Hamlin N."/>
            <person name="Harris D.E."/>
            <person name="Hidalgo J."/>
            <person name="Hodgson G."/>
            <person name="Holroyd S."/>
            <person name="Hornsby T."/>
            <person name="Howarth S."/>
            <person name="Huckle E.J."/>
            <person name="Hunt S."/>
            <person name="Jagels K."/>
            <person name="James K.D."/>
            <person name="Jones L."/>
            <person name="Jones M."/>
            <person name="Leather S."/>
            <person name="McDonald S."/>
            <person name="McLean J."/>
            <person name="Mooney P."/>
            <person name="Moule S."/>
            <person name="Mungall K.L."/>
            <person name="Murphy L.D."/>
            <person name="Niblett D."/>
            <person name="Odell C."/>
            <person name="Oliver K."/>
            <person name="O'Neil S."/>
            <person name="Pearson D."/>
            <person name="Quail M.A."/>
            <person name="Rabbinowitsch E."/>
            <person name="Rutherford K.M."/>
            <person name="Rutter S."/>
            <person name="Saunders D."/>
            <person name="Seeger K."/>
            <person name="Sharp S."/>
            <person name="Skelton J."/>
            <person name="Simmonds M.N."/>
            <person name="Squares R."/>
            <person name="Squares S."/>
            <person name="Stevens K."/>
            <person name="Taylor K."/>
            <person name="Taylor R.G."/>
            <person name="Tivey A."/>
            <person name="Walsh S.V."/>
            <person name="Warren T."/>
            <person name="Whitehead S."/>
            <person name="Woodward J.R."/>
            <person name="Volckaert G."/>
            <person name="Aert R."/>
            <person name="Robben J."/>
            <person name="Grymonprez B."/>
            <person name="Weltjens I."/>
            <person name="Vanstreels E."/>
            <person name="Rieger M."/>
            <person name="Schaefer M."/>
            <person name="Mueller-Auer S."/>
            <person name="Gabel C."/>
            <person name="Fuchs M."/>
            <person name="Duesterhoeft A."/>
            <person name="Fritzc C."/>
            <person name="Holzer E."/>
            <person name="Moestl D."/>
            <person name="Hilbert H."/>
            <person name="Borzym K."/>
            <person name="Langer I."/>
            <person name="Beck A."/>
            <person name="Lehrach H."/>
            <person name="Reinhardt R."/>
            <person name="Pohl T.M."/>
            <person name="Eger P."/>
            <person name="Zimmermann W."/>
            <person name="Wedler H."/>
            <person name="Wambutt R."/>
            <person name="Purnelle B."/>
            <person name="Goffeau A."/>
            <person name="Cadieu E."/>
            <person name="Dreano S."/>
            <person name="Gloux S."/>
            <person name="Lelaure V."/>
            <person name="Mottier S."/>
            <person name="Galibert F."/>
            <person name="Aves S.J."/>
            <person name="Xiang Z."/>
            <person name="Hunt C."/>
            <person name="Moore K."/>
            <person name="Hurst S.M."/>
            <person name="Lucas M."/>
            <person name="Rochet M."/>
            <person name="Gaillardin C."/>
            <person name="Tallada V.A."/>
            <person name="Garzon A."/>
            <person name="Thode G."/>
            <person name="Daga R.R."/>
            <person name="Cruzado L."/>
            <person name="Jimenez J."/>
            <person name="Sanchez M."/>
            <person name="del Rey F."/>
            <person name="Benito J."/>
            <person name="Dominguez A."/>
            <person name="Revuelta J.L."/>
            <person name="Moreno S."/>
            <person name="Armstrong J."/>
            <person name="Forsburg S.L."/>
            <person name="Cerutti L."/>
            <person name="Lowe T."/>
            <person name="McCombie W.R."/>
            <person name="Paulsen I."/>
            <person name="Potashkin J."/>
            <person name="Shpakovski G.V."/>
            <person name="Ussery D."/>
            <person name="Barrell B.G."/>
            <person name="Nurse P."/>
        </authorList>
    </citation>
    <scope>NUCLEOTIDE SEQUENCE [LARGE SCALE GENOMIC DNA]</scope>
    <source>
        <strain>972 / ATCC 24843</strain>
    </source>
</reference>
<reference key="2">
    <citation type="journal article" date="2006" name="Nat. Biotechnol.">
        <title>ORFeome cloning and global analysis of protein localization in the fission yeast Schizosaccharomyces pombe.</title>
        <authorList>
            <person name="Matsuyama A."/>
            <person name="Arai R."/>
            <person name="Yashiroda Y."/>
            <person name="Shirai A."/>
            <person name="Kamata A."/>
            <person name="Sekido S."/>
            <person name="Kobayashi Y."/>
            <person name="Hashimoto A."/>
            <person name="Hamamoto M."/>
            <person name="Hiraoka Y."/>
            <person name="Horinouchi S."/>
            <person name="Yoshida M."/>
        </authorList>
    </citation>
    <scope>SUBCELLULAR LOCATION [LARGE SCALE ANALYSIS]</scope>
</reference>
<name>YGL4_SCHPO</name>
<proteinExistence type="inferred from homology"/>